<proteinExistence type="evidence at protein level"/>
<dbReference type="EMBL" id="AC034106">
    <property type="protein sequence ID" value="AAF97272.1"/>
    <property type="molecule type" value="Genomic_DNA"/>
</dbReference>
<dbReference type="EMBL" id="CP002684">
    <property type="protein sequence ID" value="AEE29653.1"/>
    <property type="molecule type" value="Genomic_DNA"/>
</dbReference>
<dbReference type="EMBL" id="CP002684">
    <property type="protein sequence ID" value="ANM59252.1"/>
    <property type="molecule type" value="Genomic_DNA"/>
</dbReference>
<dbReference type="EMBL" id="AK221477">
    <property type="protein sequence ID" value="BAD94623.1"/>
    <property type="molecule type" value="mRNA"/>
</dbReference>
<dbReference type="PIR" id="E86314">
    <property type="entry name" value="E86314"/>
</dbReference>
<dbReference type="RefSeq" id="NP_001321625.1">
    <property type="nucleotide sequence ID" value="NM_001332325.1"/>
</dbReference>
<dbReference type="RefSeq" id="NP_564042.1">
    <property type="nucleotide sequence ID" value="NM_101656.3"/>
</dbReference>
<dbReference type="FunCoup" id="Q9LMT7">
    <property type="interactions" value="383"/>
</dbReference>
<dbReference type="STRING" id="3702.Q9LMT7"/>
<dbReference type="iPTMnet" id="Q9LMT7"/>
<dbReference type="PaxDb" id="3702-AT1G17930.1"/>
<dbReference type="ProteomicsDB" id="238230"/>
<dbReference type="EnsemblPlants" id="AT1G17930.1">
    <property type="protein sequence ID" value="AT1G17930.1"/>
    <property type="gene ID" value="AT1G17930"/>
</dbReference>
<dbReference type="EnsemblPlants" id="AT1G17930.2">
    <property type="protein sequence ID" value="AT1G17930.2"/>
    <property type="gene ID" value="AT1G17930"/>
</dbReference>
<dbReference type="GeneID" id="838372"/>
<dbReference type="Gramene" id="AT1G17930.1">
    <property type="protein sequence ID" value="AT1G17930.1"/>
    <property type="gene ID" value="AT1G17930"/>
</dbReference>
<dbReference type="Gramene" id="AT1G17930.2">
    <property type="protein sequence ID" value="AT1G17930.2"/>
    <property type="gene ID" value="AT1G17930"/>
</dbReference>
<dbReference type="KEGG" id="ath:AT1G17930"/>
<dbReference type="Araport" id="AT1G17930"/>
<dbReference type="TAIR" id="AT1G17930">
    <property type="gene designation" value="MAIN"/>
</dbReference>
<dbReference type="eggNOG" id="ENOG502QW7G">
    <property type="taxonomic scope" value="Eukaryota"/>
</dbReference>
<dbReference type="HOGENOM" id="CLU_028845_3_0_1"/>
<dbReference type="InParanoid" id="Q9LMT7"/>
<dbReference type="OMA" id="VEWHFPD"/>
<dbReference type="PhylomeDB" id="Q9LMT7"/>
<dbReference type="PRO" id="PR:Q9LMT7"/>
<dbReference type="Proteomes" id="UP000006548">
    <property type="component" value="Chromosome 1"/>
</dbReference>
<dbReference type="ExpressionAtlas" id="Q9LMT7">
    <property type="expression patterns" value="baseline and differential"/>
</dbReference>
<dbReference type="GO" id="GO:0005634">
    <property type="term" value="C:nucleus"/>
    <property type="evidence" value="ECO:0000314"/>
    <property type="project" value="TAIR"/>
</dbReference>
<dbReference type="GO" id="GO:0008483">
    <property type="term" value="F:transaminase activity"/>
    <property type="evidence" value="ECO:0007669"/>
    <property type="project" value="UniProtKB-KW"/>
</dbReference>
<dbReference type="GO" id="GO:0048507">
    <property type="term" value="P:meristem development"/>
    <property type="evidence" value="ECO:0000315"/>
    <property type="project" value="TAIR"/>
</dbReference>
<dbReference type="GO" id="GO:0010073">
    <property type="term" value="P:meristem maintenance"/>
    <property type="evidence" value="ECO:0007669"/>
    <property type="project" value="InterPro"/>
</dbReference>
<dbReference type="InterPro" id="IPR019557">
    <property type="entry name" value="AminoTfrase-like_pln_mobile"/>
</dbReference>
<dbReference type="InterPro" id="IPR044824">
    <property type="entry name" value="MAIN-like"/>
</dbReference>
<dbReference type="PANTHER" id="PTHR46033">
    <property type="entry name" value="PROTEIN MAIN-LIKE 2"/>
    <property type="match status" value="1"/>
</dbReference>
<dbReference type="PANTHER" id="PTHR46033:SF22">
    <property type="entry name" value="PROTEIN MAINTENANCE OF MERISTEMS"/>
    <property type="match status" value="1"/>
</dbReference>
<dbReference type="Pfam" id="PF10536">
    <property type="entry name" value="PMD"/>
    <property type="match status" value="1"/>
</dbReference>
<reference key="1">
    <citation type="journal article" date="2000" name="Nature">
        <title>Sequence and analysis of chromosome 1 of the plant Arabidopsis thaliana.</title>
        <authorList>
            <person name="Theologis A."/>
            <person name="Ecker J.R."/>
            <person name="Palm C.J."/>
            <person name="Federspiel N.A."/>
            <person name="Kaul S."/>
            <person name="White O."/>
            <person name="Alonso J."/>
            <person name="Altafi H."/>
            <person name="Araujo R."/>
            <person name="Bowman C.L."/>
            <person name="Brooks S.Y."/>
            <person name="Buehler E."/>
            <person name="Chan A."/>
            <person name="Chao Q."/>
            <person name="Chen H."/>
            <person name="Cheuk R.F."/>
            <person name="Chin C.W."/>
            <person name="Chung M.K."/>
            <person name="Conn L."/>
            <person name="Conway A.B."/>
            <person name="Conway A.R."/>
            <person name="Creasy T.H."/>
            <person name="Dewar K."/>
            <person name="Dunn P."/>
            <person name="Etgu P."/>
            <person name="Feldblyum T.V."/>
            <person name="Feng J.-D."/>
            <person name="Fong B."/>
            <person name="Fujii C.Y."/>
            <person name="Gill J.E."/>
            <person name="Goldsmith A.D."/>
            <person name="Haas B."/>
            <person name="Hansen N.F."/>
            <person name="Hughes B."/>
            <person name="Huizar L."/>
            <person name="Hunter J.L."/>
            <person name="Jenkins J."/>
            <person name="Johnson-Hopson C."/>
            <person name="Khan S."/>
            <person name="Khaykin E."/>
            <person name="Kim C.J."/>
            <person name="Koo H.L."/>
            <person name="Kremenetskaia I."/>
            <person name="Kurtz D.B."/>
            <person name="Kwan A."/>
            <person name="Lam B."/>
            <person name="Langin-Hooper S."/>
            <person name="Lee A."/>
            <person name="Lee J.M."/>
            <person name="Lenz C.A."/>
            <person name="Li J.H."/>
            <person name="Li Y.-P."/>
            <person name="Lin X."/>
            <person name="Liu S.X."/>
            <person name="Liu Z.A."/>
            <person name="Luros J.S."/>
            <person name="Maiti R."/>
            <person name="Marziali A."/>
            <person name="Militscher J."/>
            <person name="Miranda M."/>
            <person name="Nguyen M."/>
            <person name="Nierman W.C."/>
            <person name="Osborne B.I."/>
            <person name="Pai G."/>
            <person name="Peterson J."/>
            <person name="Pham P.K."/>
            <person name="Rizzo M."/>
            <person name="Rooney T."/>
            <person name="Rowley D."/>
            <person name="Sakano H."/>
            <person name="Salzberg S.L."/>
            <person name="Schwartz J.R."/>
            <person name="Shinn P."/>
            <person name="Southwick A.M."/>
            <person name="Sun H."/>
            <person name="Tallon L.J."/>
            <person name="Tambunga G."/>
            <person name="Toriumi M.J."/>
            <person name="Town C.D."/>
            <person name="Utterback T."/>
            <person name="Van Aken S."/>
            <person name="Vaysberg M."/>
            <person name="Vysotskaia V.S."/>
            <person name="Walker M."/>
            <person name="Wu D."/>
            <person name="Yu G."/>
            <person name="Fraser C.M."/>
            <person name="Venter J.C."/>
            <person name="Davis R.W."/>
        </authorList>
    </citation>
    <scope>NUCLEOTIDE SEQUENCE [LARGE SCALE GENOMIC DNA]</scope>
    <source>
        <strain>cv. Columbia</strain>
    </source>
</reference>
<reference key="2">
    <citation type="journal article" date="2017" name="Plant J.">
        <title>Araport11: a complete reannotation of the Arabidopsis thaliana reference genome.</title>
        <authorList>
            <person name="Cheng C.Y."/>
            <person name="Krishnakumar V."/>
            <person name="Chan A.P."/>
            <person name="Thibaud-Nissen F."/>
            <person name="Schobel S."/>
            <person name="Town C.D."/>
        </authorList>
    </citation>
    <scope>GENOME REANNOTATION</scope>
    <source>
        <strain>cv. Columbia</strain>
    </source>
</reference>
<reference key="3">
    <citation type="submission" date="2005-03" db="EMBL/GenBank/DDBJ databases">
        <title>Large-scale analysis of RIKEN Arabidopsis full-length (RAFL) cDNAs.</title>
        <authorList>
            <person name="Totoki Y."/>
            <person name="Seki M."/>
            <person name="Ishida J."/>
            <person name="Nakajima M."/>
            <person name="Enju A."/>
            <person name="Kamiya A."/>
            <person name="Narusaka M."/>
            <person name="Shin-i T."/>
            <person name="Nakagawa M."/>
            <person name="Sakamoto N."/>
            <person name="Oishi K."/>
            <person name="Kohara Y."/>
            <person name="Kobayashi M."/>
            <person name="Toyoda A."/>
            <person name="Sakaki Y."/>
            <person name="Sakurai T."/>
            <person name="Iida K."/>
            <person name="Akiyama K."/>
            <person name="Satou M."/>
            <person name="Toyoda T."/>
            <person name="Konagaya A."/>
            <person name="Carninci P."/>
            <person name="Kawai J."/>
            <person name="Hayashizaki Y."/>
            <person name="Shinozaki K."/>
        </authorList>
    </citation>
    <scope>NUCLEOTIDE SEQUENCE [LARGE SCALE MRNA]</scope>
    <source>
        <strain>cv. Columbia</strain>
    </source>
</reference>
<reference key="4">
    <citation type="journal article" date="2013" name="Plant J.">
        <title>Identification of MAIN, a factor involved in genome stability in the meristems of Arabidopsis thaliana.</title>
        <authorList>
            <person name="Wenig U."/>
            <person name="Meyer S."/>
            <person name="Stadler R."/>
            <person name="Fischer S."/>
            <person name="Werner D."/>
            <person name="Lauter A."/>
            <person name="Melzer M."/>
            <person name="Hoth S."/>
            <person name="Weingartner M."/>
            <person name="Sauer N."/>
        </authorList>
    </citation>
    <scope>FUNCTION</scope>
    <scope>SUBCELLULAR LOCATION</scope>
    <scope>TISSUE SPECIFICITY</scope>
    <scope>DISRUPTION PHENOTYPE</scope>
    <scope>MUTAGENESIS OF 465-ARG--ARG-467</scope>
</reference>
<comment type="function">
    <text evidence="2">Required for the organization of the root apical meristem (RAM) and the shoot apical meristem (SAM). Required to maintain genome stability and cell division activity in meristematic cells.</text>
</comment>
<comment type="subcellular location">
    <subcellularLocation>
        <location evidence="2">Nucleus</location>
    </subcellularLocation>
</comment>
<comment type="tissue specificity">
    <text evidence="2">Expressed in root meristem, root vasculature, shoot apical meristem (SAM), leaf vasculature and ovules.</text>
</comment>
<comment type="disruption phenotype">
    <text evidence="2">Developmental defects, such as short roots, misshaped leaves, reduced fertility and partial fasciation of stems.</text>
</comment>
<evidence type="ECO:0000256" key="1">
    <source>
        <dbReference type="SAM" id="MobiDB-lite"/>
    </source>
</evidence>
<evidence type="ECO:0000269" key="2">
    <source>
    </source>
</evidence>
<evidence type="ECO:0000303" key="3">
    <source>
    </source>
</evidence>
<evidence type="ECO:0000312" key="4">
    <source>
        <dbReference type="Araport" id="AT1G17930"/>
    </source>
</evidence>
<evidence type="ECO:0000312" key="5">
    <source>
        <dbReference type="EMBL" id="AAF97272.1"/>
    </source>
</evidence>
<gene>
    <name evidence="3" type="primary">MAIN</name>
    <name evidence="4" type="ordered locus">At1g17930</name>
    <name evidence="5" type="ORF">F2H15.15</name>
</gene>
<protein>
    <recommendedName>
        <fullName evidence="3">Protein MAINTENANCE OF MERISTEMS</fullName>
    </recommendedName>
</protein>
<name>MAIN_ARATH</name>
<organism>
    <name type="scientific">Arabidopsis thaliana</name>
    <name type="common">Mouse-ear cress</name>
    <dbReference type="NCBI Taxonomy" id="3702"/>
    <lineage>
        <taxon>Eukaryota</taxon>
        <taxon>Viridiplantae</taxon>
        <taxon>Streptophyta</taxon>
        <taxon>Embryophyta</taxon>
        <taxon>Tracheophyta</taxon>
        <taxon>Spermatophyta</taxon>
        <taxon>Magnoliopsida</taxon>
        <taxon>eudicotyledons</taxon>
        <taxon>Gunneridae</taxon>
        <taxon>Pentapetalae</taxon>
        <taxon>rosids</taxon>
        <taxon>malvids</taxon>
        <taxon>Brassicales</taxon>
        <taxon>Brassicaceae</taxon>
        <taxon>Camelineae</taxon>
        <taxon>Arabidopsis</taxon>
    </lineage>
</organism>
<feature type="chain" id="PRO_0000438662" description="Protein MAINTENANCE OF MERISTEMS">
    <location>
        <begin position="1"/>
        <end position="478"/>
    </location>
</feature>
<feature type="region of interest" description="Disordered" evidence="1">
    <location>
        <begin position="459"/>
        <end position="478"/>
    </location>
</feature>
<feature type="short sequence motif" description="Nuclear localization signal" evidence="2">
    <location>
        <begin position="464"/>
        <end position="468"/>
    </location>
</feature>
<feature type="mutagenesis site" description="Targets to the cytoplasm." evidence="2">
    <original>RKR</original>
    <variation>LNQ</variation>
    <location>
        <begin position="465"/>
        <end position="467"/>
    </location>
</feature>
<sequence>MPVLYEQDKHVSSAILTGQERGVLRCQERTSLLHHWKLTKEQIALVEKAGFGWFRLVGSISLNNSLISALVERWRRETNTFHFPCGEMTITLDEVSLILGLAVDGKPVVGVKEKDEDPSQVCLRLLGKLPKGELSGNRVTAKWLKESFAECPKGATMKEIEYHTRAYLIYIVGSTIFATTDPSKISVDYLILFEDFEKAGEYAWGAAALAFLYRQIGNASQRSQSIIGGCLTLLQCWSYFHLNIDRPKRTTRQFPLALLWKGRQQSRSKNDLFKYRKALDDLDPSNVSWCPFEGDLDIVPQSFKDNLLLGRSRTKLIGPKVVEWHFPDRCMKQFGLCQVIPGEVPPRKNEKNHDEDLLEDMNTADEEWMRRRENIVENGGGNGDESEYMQWFNSITVPKLHRDTSLEADIMNVQAAILQFDEVASTLSLEDLHPEEREAIEEAVMSMSNALRVGDWYEASTTNKRKRREEQQQTDWSE</sequence>
<keyword id="KW-0032">Aminotransferase</keyword>
<keyword id="KW-0217">Developmental protein</keyword>
<keyword id="KW-0341">Growth regulation</keyword>
<keyword id="KW-0539">Nucleus</keyword>
<keyword id="KW-1185">Reference proteome</keyword>
<keyword id="KW-0808">Transferase</keyword>
<accession>Q9LMT7</accession>